<organism>
    <name type="scientific">Phyllomedusa sauvagei</name>
    <name type="common">Sauvage's leaf frog</name>
    <dbReference type="NCBI Taxonomy" id="8395"/>
    <lineage>
        <taxon>Eukaryota</taxon>
        <taxon>Metazoa</taxon>
        <taxon>Chordata</taxon>
        <taxon>Craniata</taxon>
        <taxon>Vertebrata</taxon>
        <taxon>Euteleostomi</taxon>
        <taxon>Amphibia</taxon>
        <taxon>Batrachia</taxon>
        <taxon>Anura</taxon>
        <taxon>Neobatrachia</taxon>
        <taxon>Hyloidea</taxon>
        <taxon>Hylidae</taxon>
        <taxon>Phyllomedusinae</taxon>
        <taxon>Phyllomedusa</taxon>
    </lineage>
</organism>
<proteinExistence type="evidence at protein level"/>
<reference key="1">
    <citation type="journal article" date="2013" name="PLoS ONE">
        <title>Structure, antimicrobial activities and mode of interaction with membranes of novel [corrected] phylloseptins from the painted-belly leaf frog, Phyllomedusa sauvagii.</title>
        <authorList>
            <person name="Raja Z."/>
            <person name="Andre S."/>
            <person name="Piesse C."/>
            <person name="Sereno D."/>
            <person name="Nicolas P."/>
            <person name="Foulon T."/>
            <person name="Oury B."/>
            <person name="Ladram A."/>
        </authorList>
    </citation>
    <scope>NUCLEOTIDE SEQUENCE [MRNA]</scope>
    <scope>PROTEIN SEQUENCE OF 49-66</scope>
    <scope>FUNCTION</scope>
    <scope>AMIDATION AT LEU-66</scope>
    <scope>SUBCELLULAR LOCATION</scope>
    <scope>MASS SPECTROMETRY</scope>
    <source>
        <tissue>Skin secretion</tissue>
    </source>
</reference>
<feature type="signal peptide" evidence="2">
    <location>
        <begin position="1"/>
        <end position="22"/>
    </location>
</feature>
<feature type="propeptide" id="PRO_0000449586" evidence="7">
    <location>
        <begin position="23"/>
        <end position="48"/>
    </location>
</feature>
<feature type="peptide" id="PRO_5003362865" description="Medusin-S1" evidence="4">
    <location>
        <begin position="49"/>
        <end position="66"/>
    </location>
</feature>
<feature type="region of interest" description="Disordered" evidence="3">
    <location>
        <begin position="26"/>
        <end position="47"/>
    </location>
</feature>
<feature type="compositionally biased region" description="Acidic residues" evidence="3">
    <location>
        <begin position="31"/>
        <end position="40"/>
    </location>
</feature>
<feature type="modified residue" description="Leucine amide" evidence="4">
    <location>
        <position position="66"/>
    </location>
</feature>
<evidence type="ECO:0000250" key="1">
    <source>
        <dbReference type="UniProtKB" id="L0P402"/>
    </source>
</evidence>
<evidence type="ECO:0000255" key="2"/>
<evidence type="ECO:0000256" key="3">
    <source>
        <dbReference type="SAM" id="MobiDB-lite"/>
    </source>
</evidence>
<evidence type="ECO:0000269" key="4">
    <source>
    </source>
</evidence>
<evidence type="ECO:0000303" key="5">
    <source>
    </source>
</evidence>
<evidence type="ECO:0000305" key="6"/>
<evidence type="ECO:0000305" key="7">
    <source>
    </source>
</evidence>
<accession>F7UI88</accession>
<name>MDS1_PHYSA</name>
<keyword id="KW-0027">Amidation</keyword>
<keyword id="KW-0878">Amphibian defense peptide</keyword>
<keyword id="KW-0044">Antibiotic</keyword>
<keyword id="KW-0929">Antimicrobial</keyword>
<keyword id="KW-0165">Cleavage on pair of basic residues</keyword>
<keyword id="KW-0903">Direct protein sequencing</keyword>
<keyword id="KW-0391">Immunity</keyword>
<keyword id="KW-0399">Innate immunity</keyword>
<keyword id="KW-0472">Membrane</keyword>
<keyword id="KW-0964">Secreted</keyword>
<keyword id="KW-0732">Signal</keyword>
<keyword id="KW-1052">Target cell membrane</keyword>
<keyword id="KW-1053">Target membrane</keyword>
<comment type="function">
    <text evidence="4 7">Antibacterial peptide with moderate activity against the Gram-positive bacteria (S.aureus ATCC 25923, MIC=25 uM), but not against all other bacteria (both Gram-positive and Gram-negative) tested. Does not show activity against fungi, and against Leishmania species (PubMed:23967105). It adopts an alpha-helical structure with very low amphipathicity in membrane environments (Probable).</text>
</comment>
<comment type="subcellular location">
    <subcellularLocation>
        <location evidence="4">Secreted</location>
    </subcellularLocation>
    <subcellularLocation>
        <location evidence="4">Target cell membrane</location>
    </subcellularLocation>
    <text evidence="7">Forms a helical membrane channel in the target.</text>
</comment>
<comment type="tissue specificity">
    <text evidence="1">Expressed by the skin glands.</text>
</comment>
<comment type="mass spectrometry"/>
<comment type="miscellaneous">
    <text evidence="6">The primary structure of this peptide is identical to that of Medusin-PH from Phyllomedusa hypochondrialis (AC L0P402).</text>
</comment>
<comment type="similarity">
    <text evidence="2">Belongs to the frog skin active peptide (FSAP) family. Medusin subfamily.</text>
</comment>
<comment type="online information" name="The antimicrobial peptide database">
    <link uri="https://wangapd3.com/database/query_output.php?ID=02176"/>
</comment>
<dbReference type="EMBL" id="AM903081">
    <property type="protein sequence ID" value="CAP17494.1"/>
    <property type="molecule type" value="mRNA"/>
</dbReference>
<dbReference type="GO" id="GO:0005576">
    <property type="term" value="C:extracellular region"/>
    <property type="evidence" value="ECO:0007669"/>
    <property type="project" value="UniProtKB-SubCell"/>
</dbReference>
<dbReference type="GO" id="GO:0016020">
    <property type="term" value="C:membrane"/>
    <property type="evidence" value="ECO:0007669"/>
    <property type="project" value="UniProtKB-KW"/>
</dbReference>
<dbReference type="GO" id="GO:0044218">
    <property type="term" value="C:other organism cell membrane"/>
    <property type="evidence" value="ECO:0007669"/>
    <property type="project" value="UniProtKB-KW"/>
</dbReference>
<dbReference type="GO" id="GO:0042742">
    <property type="term" value="P:defense response to bacterium"/>
    <property type="evidence" value="ECO:0007669"/>
    <property type="project" value="UniProtKB-KW"/>
</dbReference>
<dbReference type="GO" id="GO:0045087">
    <property type="term" value="P:innate immune response"/>
    <property type="evidence" value="ECO:0007669"/>
    <property type="project" value="UniProtKB-KW"/>
</dbReference>
<dbReference type="InterPro" id="IPR004275">
    <property type="entry name" value="Frog_antimicrobial_propeptide"/>
</dbReference>
<dbReference type="Pfam" id="PF03032">
    <property type="entry name" value="FSAP_sig_propep"/>
    <property type="match status" value="1"/>
</dbReference>
<protein>
    <recommendedName>
        <fullName evidence="6">Medusin-S1</fullName>
        <shortName evidence="6">MDS-S1</shortName>
    </recommendedName>
    <alternativeName>
        <fullName evidence="5">Phylloseptin-S5</fullName>
        <shortName evidence="5">PLS-S6</shortName>
    </alternativeName>
</protein>
<sequence>MSFLKKSLFLVLFLGFVSLSICEEEKRETEEKENEQEDDREERSEEKRLLGMIPVAISAISALSKLG</sequence>